<evidence type="ECO:0000255" key="1"/>
<evidence type="ECO:0000305" key="2"/>
<reference key="1">
    <citation type="journal article" date="1998" name="Nature">
        <title>The complete genome of the hyperthermophilic bacterium Aquifex aeolicus.</title>
        <authorList>
            <person name="Deckert G."/>
            <person name="Warren P.V."/>
            <person name="Gaasterland T."/>
            <person name="Young W.G."/>
            <person name="Lenox A.L."/>
            <person name="Graham D.E."/>
            <person name="Overbeek R."/>
            <person name="Snead M.A."/>
            <person name="Keller M."/>
            <person name="Aujay M."/>
            <person name="Huber R."/>
            <person name="Feldman R.A."/>
            <person name="Short J.M."/>
            <person name="Olsen G.J."/>
            <person name="Swanson R.V."/>
        </authorList>
    </citation>
    <scope>NUCLEOTIDE SEQUENCE [LARGE SCALE GENOMIC DNA]</scope>
    <source>
        <strain>VF5</strain>
    </source>
</reference>
<proteinExistence type="predicted"/>
<protein>
    <recommendedName>
        <fullName>Uncharacterized protein aq_376</fullName>
    </recommendedName>
</protein>
<keyword id="KW-1003">Cell membrane</keyword>
<keyword id="KW-0472">Membrane</keyword>
<keyword id="KW-1185">Reference proteome</keyword>
<keyword id="KW-0812">Transmembrane</keyword>
<keyword id="KW-1133">Transmembrane helix</keyword>
<accession>O66698</accession>
<sequence>MEGIKVLAKQFGKIKTPQGLAVAIALITAIAWFPDGLAGFLPSLKSNPFQAIIGAILTILGLSIIFFLHKKLRRGQKDSIIAEFGFIVLTLIFSLIVFNDFAITQFITSSLVFFSAWLHVREMEIVDYTVREVRPSNVKATVIFLSSAKYDEKFKKLMEKVEEIPTINDFFDFLEKEKMRLPWEMQLRLINEFSRSLKYVYVIGSVNSSSGSFEQIEDFKLIVNKFFPQIEVIKYREGLDFENLEKNFGVLKEIYSELKTKGLKEREIIIDTTGGQKIQSIAGALYSTAYDRFFAYVSTNSKSVKVFDVVPTE</sequence>
<dbReference type="EMBL" id="AE000657">
    <property type="protein sequence ID" value="AAC06659.1"/>
    <property type="molecule type" value="Genomic_DNA"/>
</dbReference>
<dbReference type="PIR" id="F70333">
    <property type="entry name" value="F70333"/>
</dbReference>
<dbReference type="RefSeq" id="NP_213258.1">
    <property type="nucleotide sequence ID" value="NC_000918.1"/>
</dbReference>
<dbReference type="RefSeq" id="WP_010880196.1">
    <property type="nucleotide sequence ID" value="NC_000918.1"/>
</dbReference>
<dbReference type="STRING" id="224324.aq_376"/>
<dbReference type="EnsemblBacteria" id="AAC06659">
    <property type="protein sequence ID" value="AAC06659"/>
    <property type="gene ID" value="aq_376"/>
</dbReference>
<dbReference type="KEGG" id="aae:aq_376"/>
<dbReference type="eggNOG" id="ENOG5032YUE">
    <property type="taxonomic scope" value="Bacteria"/>
</dbReference>
<dbReference type="HOGENOM" id="CLU_887530_0_0_0"/>
<dbReference type="InParanoid" id="O66698"/>
<dbReference type="OrthoDB" id="14917at2"/>
<dbReference type="Proteomes" id="UP000000798">
    <property type="component" value="Chromosome"/>
</dbReference>
<dbReference type="GO" id="GO:0005886">
    <property type="term" value="C:plasma membrane"/>
    <property type="evidence" value="ECO:0007669"/>
    <property type="project" value="UniProtKB-SubCell"/>
</dbReference>
<gene>
    <name type="ordered locus">aq_376</name>
</gene>
<name>Y376_AQUAE</name>
<organism>
    <name type="scientific">Aquifex aeolicus (strain VF5)</name>
    <dbReference type="NCBI Taxonomy" id="224324"/>
    <lineage>
        <taxon>Bacteria</taxon>
        <taxon>Pseudomonadati</taxon>
        <taxon>Aquificota</taxon>
        <taxon>Aquificia</taxon>
        <taxon>Aquificales</taxon>
        <taxon>Aquificaceae</taxon>
        <taxon>Aquifex</taxon>
    </lineage>
</organism>
<feature type="chain" id="PRO_0000186856" description="Uncharacterized protein aq_376">
    <location>
        <begin position="1"/>
        <end position="313"/>
    </location>
</feature>
<feature type="transmembrane region" description="Helical" evidence="1">
    <location>
        <begin position="19"/>
        <end position="41"/>
    </location>
</feature>
<feature type="transmembrane region" description="Helical" evidence="1">
    <location>
        <begin position="51"/>
        <end position="68"/>
    </location>
</feature>
<feature type="transmembrane region" description="Helical" evidence="1">
    <location>
        <begin position="81"/>
        <end position="103"/>
    </location>
</feature>
<comment type="subcellular location">
    <subcellularLocation>
        <location evidence="2">Cell membrane</location>
        <topology evidence="2">Multi-pass membrane protein</topology>
    </subcellularLocation>
</comment>